<accession>Q3YWA8</accession>
<proteinExistence type="inferred from homology"/>
<evidence type="ECO:0000255" key="1">
    <source>
        <dbReference type="HAMAP-Rule" id="MF_01810"/>
    </source>
</evidence>
<evidence type="ECO:0000256" key="2">
    <source>
        <dbReference type="SAM" id="MobiDB-lite"/>
    </source>
</evidence>
<keyword id="KW-0997">Cell inner membrane</keyword>
<keyword id="KW-1003">Cell membrane</keyword>
<keyword id="KW-0143">Chaperone</keyword>
<keyword id="KW-0472">Membrane</keyword>
<keyword id="KW-0653">Protein transport</keyword>
<keyword id="KW-1185">Reference proteome</keyword>
<keyword id="KW-0812">Transmembrane</keyword>
<keyword id="KW-1133">Transmembrane helix</keyword>
<keyword id="KW-0813">Transport</keyword>
<dbReference type="EMBL" id="CP000038">
    <property type="protein sequence ID" value="AAZ90204.1"/>
    <property type="molecule type" value="Genomic_DNA"/>
</dbReference>
<dbReference type="RefSeq" id="WP_000378258.1">
    <property type="nucleotide sequence ID" value="NC_007384.1"/>
</dbReference>
<dbReference type="SMR" id="Q3YWA8"/>
<dbReference type="GeneID" id="93778448"/>
<dbReference type="KEGG" id="ssn:SSON_3656"/>
<dbReference type="HOGENOM" id="CLU_016535_3_0_6"/>
<dbReference type="Proteomes" id="UP000002529">
    <property type="component" value="Chromosome"/>
</dbReference>
<dbReference type="GO" id="GO:0005886">
    <property type="term" value="C:plasma membrane"/>
    <property type="evidence" value="ECO:0007669"/>
    <property type="project" value="UniProtKB-SubCell"/>
</dbReference>
<dbReference type="GO" id="GO:0032977">
    <property type="term" value="F:membrane insertase activity"/>
    <property type="evidence" value="ECO:0007669"/>
    <property type="project" value="InterPro"/>
</dbReference>
<dbReference type="GO" id="GO:0051205">
    <property type="term" value="P:protein insertion into membrane"/>
    <property type="evidence" value="ECO:0007669"/>
    <property type="project" value="TreeGrafter"/>
</dbReference>
<dbReference type="GO" id="GO:0015031">
    <property type="term" value="P:protein transport"/>
    <property type="evidence" value="ECO:0007669"/>
    <property type="project" value="UniProtKB-KW"/>
</dbReference>
<dbReference type="CDD" id="cd20070">
    <property type="entry name" value="5TM_YidC_Alb3"/>
    <property type="match status" value="1"/>
</dbReference>
<dbReference type="CDD" id="cd19961">
    <property type="entry name" value="EcYidC-like_peri"/>
    <property type="match status" value="1"/>
</dbReference>
<dbReference type="FunFam" id="2.70.98.90:FF:000001">
    <property type="entry name" value="Membrane protein insertase YidC"/>
    <property type="match status" value="1"/>
</dbReference>
<dbReference type="Gene3D" id="2.70.98.90">
    <property type="match status" value="1"/>
</dbReference>
<dbReference type="HAMAP" id="MF_01810">
    <property type="entry name" value="YidC_type1"/>
    <property type="match status" value="1"/>
</dbReference>
<dbReference type="InterPro" id="IPR019998">
    <property type="entry name" value="Membr_insert_YidC"/>
</dbReference>
<dbReference type="InterPro" id="IPR028053">
    <property type="entry name" value="Membr_insert_YidC_N"/>
</dbReference>
<dbReference type="InterPro" id="IPR001708">
    <property type="entry name" value="YidC/ALB3/OXA1/COX18"/>
</dbReference>
<dbReference type="InterPro" id="IPR028055">
    <property type="entry name" value="YidC/Oxa/ALB_C"/>
</dbReference>
<dbReference type="InterPro" id="IPR047196">
    <property type="entry name" value="YidC_ALB_C"/>
</dbReference>
<dbReference type="InterPro" id="IPR038221">
    <property type="entry name" value="YidC_periplasmic_sf"/>
</dbReference>
<dbReference type="NCBIfam" id="NF002351">
    <property type="entry name" value="PRK01318.1-1"/>
    <property type="match status" value="1"/>
</dbReference>
<dbReference type="NCBIfam" id="NF002352">
    <property type="entry name" value="PRK01318.1-3"/>
    <property type="match status" value="1"/>
</dbReference>
<dbReference type="NCBIfam" id="NF002353">
    <property type="entry name" value="PRK01318.1-4"/>
    <property type="match status" value="1"/>
</dbReference>
<dbReference type="NCBIfam" id="TIGR03593">
    <property type="entry name" value="yidC_nterm"/>
    <property type="match status" value="1"/>
</dbReference>
<dbReference type="NCBIfam" id="TIGR03592">
    <property type="entry name" value="yidC_oxa1_cterm"/>
    <property type="match status" value="1"/>
</dbReference>
<dbReference type="PANTHER" id="PTHR12428:SF65">
    <property type="entry name" value="CYTOCHROME C OXIDASE ASSEMBLY PROTEIN COX18, MITOCHONDRIAL"/>
    <property type="match status" value="1"/>
</dbReference>
<dbReference type="PANTHER" id="PTHR12428">
    <property type="entry name" value="OXA1"/>
    <property type="match status" value="1"/>
</dbReference>
<dbReference type="Pfam" id="PF02096">
    <property type="entry name" value="60KD_IMP"/>
    <property type="match status" value="1"/>
</dbReference>
<dbReference type="Pfam" id="PF14849">
    <property type="entry name" value="YidC_periplas"/>
    <property type="match status" value="1"/>
</dbReference>
<dbReference type="PRINTS" id="PR00701">
    <property type="entry name" value="60KDINNERMP"/>
</dbReference>
<dbReference type="PRINTS" id="PR01900">
    <property type="entry name" value="YIDCPROTEIN"/>
</dbReference>
<name>YIDC_SHISS</name>
<feature type="chain" id="PRO_1000070178" description="Membrane protein insertase YidC">
    <location>
        <begin position="1"/>
        <end position="548"/>
    </location>
</feature>
<feature type="transmembrane region" description="Helical" evidence="1">
    <location>
        <begin position="6"/>
        <end position="26"/>
    </location>
</feature>
<feature type="transmembrane region" description="Helical" evidence="1">
    <location>
        <begin position="350"/>
        <end position="370"/>
    </location>
</feature>
<feature type="transmembrane region" description="Helical" evidence="1">
    <location>
        <begin position="420"/>
        <end position="440"/>
    </location>
</feature>
<feature type="transmembrane region" description="Helical" evidence="1">
    <location>
        <begin position="458"/>
        <end position="478"/>
    </location>
</feature>
<feature type="transmembrane region" description="Helical" evidence="1">
    <location>
        <begin position="499"/>
        <end position="519"/>
    </location>
</feature>
<feature type="region of interest" description="Disordered" evidence="2">
    <location>
        <begin position="28"/>
        <end position="55"/>
    </location>
</feature>
<feature type="compositionally biased region" description="Low complexity" evidence="2">
    <location>
        <begin position="30"/>
        <end position="50"/>
    </location>
</feature>
<protein>
    <recommendedName>
        <fullName evidence="1">Membrane protein insertase YidC</fullName>
    </recommendedName>
    <alternativeName>
        <fullName evidence="1">Foldase YidC</fullName>
    </alternativeName>
    <alternativeName>
        <fullName evidence="1">Membrane integrase YidC</fullName>
    </alternativeName>
    <alternativeName>
        <fullName evidence="1">Membrane protein YidC</fullName>
    </alternativeName>
</protein>
<comment type="function">
    <text evidence="1">Required for the insertion and/or proper folding and/or complex formation of integral membrane proteins into the membrane. Involved in integration of membrane proteins that insert both dependently and independently of the Sec translocase complex, as well as at least some lipoproteins. Aids folding of multispanning membrane proteins.</text>
</comment>
<comment type="subunit">
    <text evidence="1">Interacts with the Sec translocase complex via SecD. Specifically interacts with transmembrane segments of nascent integral membrane proteins during membrane integration.</text>
</comment>
<comment type="subcellular location">
    <subcellularLocation>
        <location evidence="1">Cell inner membrane</location>
        <topology evidence="1">Multi-pass membrane protein</topology>
    </subcellularLocation>
</comment>
<comment type="similarity">
    <text evidence="1">Belongs to the OXA1/ALB3/YidC family. Type 1 subfamily.</text>
</comment>
<gene>
    <name evidence="1" type="primary">yidC</name>
    <name type="ordered locus">SSON_3656</name>
</gene>
<sequence>MDSQRNLLVIALLFVSFMIWQAWEQDKNPQPQAQQTTQTTTTAAGSAADQGVPASGQGKLISVKTDVLDLTINTRGGDVEQALLPAYPKELNSTQPFQLLETSPQFIYQAQSGLTGRDGPDNPANGPRPLYNVEKDAYVLAEGQNELQVPMTYTDAAGNTFTKTFVLKRGDYAVNVNYNVQNAGEKPLEISTFGQLKQSITLPPHLDTGSSNFALHTFRGAAYSTPDEKYEKYKFDTIADNENLNISSKGGWVAMLQQYFATAWIPHNDGTNNFYTANLGNGIAAIGYKSQPVLVQPGQTGAMNSTLWVGPEIQDKMAAVAPHLDLTVDYGWLWFISQPLFKLLKWIHSFVGNWGFSIIIITFIVRGIMYPLTKAQYTSMAKMRMLQPKIQAMRERLGDDKQRISQEMMALYKAEKVNPLGGCFPLLIQMPIFLALYYMLMGSVELRQAPFALWIHDLSAQDPYYILPILMGVTMFFIQKMSPTTVTDPMQQKIMTFMPVIFTVFFLWFPSGLVLYYIVSNLVTIIQQQLIYRGLEKRGLHSREKKKS</sequence>
<reference key="1">
    <citation type="journal article" date="2005" name="Nucleic Acids Res.">
        <title>Genome dynamics and diversity of Shigella species, the etiologic agents of bacillary dysentery.</title>
        <authorList>
            <person name="Yang F."/>
            <person name="Yang J."/>
            <person name="Zhang X."/>
            <person name="Chen L."/>
            <person name="Jiang Y."/>
            <person name="Yan Y."/>
            <person name="Tang X."/>
            <person name="Wang J."/>
            <person name="Xiong Z."/>
            <person name="Dong J."/>
            <person name="Xue Y."/>
            <person name="Zhu Y."/>
            <person name="Xu X."/>
            <person name="Sun L."/>
            <person name="Chen S."/>
            <person name="Nie H."/>
            <person name="Peng J."/>
            <person name="Xu J."/>
            <person name="Wang Y."/>
            <person name="Yuan Z."/>
            <person name="Wen Y."/>
            <person name="Yao Z."/>
            <person name="Shen Y."/>
            <person name="Qiang B."/>
            <person name="Hou Y."/>
            <person name="Yu J."/>
            <person name="Jin Q."/>
        </authorList>
    </citation>
    <scope>NUCLEOTIDE SEQUENCE [LARGE SCALE GENOMIC DNA]</scope>
    <source>
        <strain>Ss046</strain>
    </source>
</reference>
<organism>
    <name type="scientific">Shigella sonnei (strain Ss046)</name>
    <dbReference type="NCBI Taxonomy" id="300269"/>
    <lineage>
        <taxon>Bacteria</taxon>
        <taxon>Pseudomonadati</taxon>
        <taxon>Pseudomonadota</taxon>
        <taxon>Gammaproteobacteria</taxon>
        <taxon>Enterobacterales</taxon>
        <taxon>Enterobacteriaceae</taxon>
        <taxon>Shigella</taxon>
    </lineage>
</organism>